<sequence>MTTSASSHLNKGIKQVYMSLPQGEKVQAMYIWIDGTGEGLRCKTRTLDSEPKCVEELPEWNFDGSSTLQSEGSNSDMYLVPAAMFRDPFRKDPNKLVLCESFQVQFEGPAETNLRHTCKRIMDMVSNQHPWFGMEQEYTLMGTDGHPFGWPSNGFPGPQGPYYCGVGADRAYGRDIVEAHYRACLYAGVKIAGTNAEVMPAQWEFQIGPCEGISMGDHLWVARFILHRVCEDFGVIATFDPKPIPGNWNGAGCHTNFSTKAMREENGLKYIEEAIEKLSKRHQYHIRAYDPKGGLDNARRLTGFHETSNINDFSAGVANRSASIRIPRTVGQEKKGYFEDRRPSANCDPFSVTEALIRTCLLNETGDEPFQYKN</sequence>
<comment type="function">
    <text evidence="2 3">Glutamine synthetase that catalyzes the ATP-dependent conversion of glutamate and ammonia to glutamine. Its role depends on tissue localization: in the brain, it regulates the levels of toxic ammonia and converts neurotoxic glutamate to harmless glutamine, whereas in the liver, it is one of the enzymes responsible for the removal of ammonia. Plays a key role in ammonium detoxification during erythropoiesis: the glutamine synthetase activity is required to remove ammonium generated by porphobilinogen deaminase (HMBS) during heme biosynthesis to prevent ammonium accumulation and oxidative stress (By similarity). Essential for proliferation of fetal skin fibroblasts (By similarity). Independently of its glutamine synthetase activity, required for endothelial cell migration during vascular development (By similarity). Involved in angiogenesis by regulating membrane localization and activation of the GTPase RHOJ, possibly by promoting RHOJ palmitoylation. May act as a palmitoyltransferase for RHOJ: able to autopalmitoylate and then transfer the palmitoyl group to RHOJ. Plays a role in ribosomal 40S subunit biogenesis. Through the interaction with BEST2, inhibits BEST2 channel activity by affecting the gating at the aperture in the absence of intracellular L-glutamate, but sensitizes BEST2 to intracellular L-glutamate, which promotes the opening of BEST2 and thus relieves its inhibitory effect on BEST2 (By similarity).</text>
</comment>
<comment type="catalytic activity">
    <reaction evidence="2">
        <text>L-glutamate + NH4(+) + ATP = L-glutamine + ADP + phosphate + H(+)</text>
        <dbReference type="Rhea" id="RHEA:16169"/>
        <dbReference type="ChEBI" id="CHEBI:15378"/>
        <dbReference type="ChEBI" id="CHEBI:28938"/>
        <dbReference type="ChEBI" id="CHEBI:29985"/>
        <dbReference type="ChEBI" id="CHEBI:30616"/>
        <dbReference type="ChEBI" id="CHEBI:43474"/>
        <dbReference type="ChEBI" id="CHEBI:58359"/>
        <dbReference type="ChEBI" id="CHEBI:456216"/>
        <dbReference type="EC" id="6.3.1.2"/>
    </reaction>
</comment>
<comment type="catalytic activity">
    <reaction evidence="2">
        <text>L-cysteinyl-[protein] + hexadecanoyl-CoA = S-hexadecanoyl-L-cysteinyl-[protein] + CoA</text>
        <dbReference type="Rhea" id="RHEA:36683"/>
        <dbReference type="Rhea" id="RHEA-COMP:10131"/>
        <dbReference type="Rhea" id="RHEA-COMP:11032"/>
        <dbReference type="ChEBI" id="CHEBI:29950"/>
        <dbReference type="ChEBI" id="CHEBI:57287"/>
        <dbReference type="ChEBI" id="CHEBI:57379"/>
        <dbReference type="ChEBI" id="CHEBI:74151"/>
        <dbReference type="EC" id="2.3.1.225"/>
    </reaction>
</comment>
<comment type="cofactor">
    <cofactor evidence="1">
        <name>Mg(2+)</name>
        <dbReference type="ChEBI" id="CHEBI:18420"/>
    </cofactor>
    <cofactor evidence="2">
        <name>Mn(2+)</name>
        <dbReference type="ChEBI" id="CHEBI:29035"/>
    </cofactor>
</comment>
<comment type="activity regulation">
    <text evidence="2">Glutamine synthetase activity is inhibited by methionine sulfoximine (MSO).</text>
</comment>
<comment type="subunit">
    <text evidence="2 3">Decamer; composed of two pentamers (By similarity). Interacts with PALMD (By similarity). Interacts with RHOJ (By similarity). Interacts with BEST2; this interaction tethers a fraction of GLUL to the membrane, causing a decrease of cytosolic glutamine synthase (GS) activity and inhibits the chloride channel activity of BEST2 by affecting the gating at the aperture in the absence of intracellular glutamate (By similarity).</text>
</comment>
<comment type="subcellular location">
    <subcellularLocation>
        <location evidence="2">Cytoplasm</location>
        <location evidence="2">Cytosol</location>
    </subcellularLocation>
    <subcellularLocation>
        <location evidence="1">Microsome</location>
    </subcellularLocation>
    <subcellularLocation>
        <location evidence="1">Mitochondrion</location>
    </subcellularLocation>
    <subcellularLocation>
        <location evidence="2">Cell membrane</location>
        <topology evidence="2">Lipid-anchor</topology>
    </subcellularLocation>
    <text evidence="2">Mainly localizes in the cytosol, with a fraction associated with the cell membrane.</text>
</comment>
<comment type="PTM">
    <text evidence="2">Palmitoylated; undergoes autopalmitoylation.</text>
</comment>
<comment type="PTM">
    <text evidence="2">Acetylated by EP300/p300; acetylation is stimulated by increased glutamine levels and promotes ubiquitin-mediated proteasomal degradation.</text>
</comment>
<comment type="PTM">
    <text evidence="2 3">Ubiquitinated by ZNRF1 (By similarity). Ubiquitinated by the DCX (DDB1-CUL4-X-box) E3 ubiquitin-protein ligase complex called CRL4(CRBN), leading to proteasomal degradation (By similarity).</text>
</comment>
<comment type="similarity">
    <text evidence="8">Belongs to the glutamine synthetase family.</text>
</comment>
<accession>Q4R7U3</accession>
<reference key="1">
    <citation type="submission" date="2005-06" db="EMBL/GenBank/DDBJ databases">
        <title>DNA sequences of macaque genes expressed in brain or testis and its evolutionary implications.</title>
        <authorList>
            <consortium name="International consortium for macaque cDNA sequencing and analysis"/>
        </authorList>
    </citation>
    <scope>NUCLEOTIDE SEQUENCE [LARGE SCALE MRNA]</scope>
    <source>
        <tissue>Testis</tissue>
    </source>
</reference>
<feature type="chain" id="PRO_0000153140" description="Glutamine synthetase">
    <location>
        <begin position="1"/>
        <end position="374"/>
    </location>
</feature>
<feature type="domain" description="GS beta-grasp" evidence="5">
    <location>
        <begin position="24"/>
        <end position="106"/>
    </location>
</feature>
<feature type="domain" description="GS catalytic" evidence="6">
    <location>
        <begin position="114"/>
        <end position="374"/>
    </location>
</feature>
<feature type="region of interest" description="Required for glutamine-induced ubiquitination by CRL4(CRBN) and proteasomal degradation" evidence="2">
    <location>
        <begin position="2"/>
        <end position="25"/>
    </location>
</feature>
<feature type="binding site" evidence="2">
    <location>
        <position position="135"/>
    </location>
    <ligand>
        <name>ATP</name>
        <dbReference type="ChEBI" id="CHEBI:30616"/>
    </ligand>
</feature>
<feature type="binding site" evidence="2">
    <location>
        <position position="135"/>
    </location>
    <ligand>
        <name>Mn(2+)</name>
        <dbReference type="ChEBI" id="CHEBI:29035"/>
        <label>1</label>
    </ligand>
</feature>
<feature type="binding site" evidence="2">
    <location>
        <position position="137"/>
    </location>
    <ligand>
        <name>Mn(2+)</name>
        <dbReference type="ChEBI" id="CHEBI:29035"/>
        <label>2</label>
    </ligand>
</feature>
<feature type="binding site" evidence="2">
    <location>
        <position position="197"/>
    </location>
    <ligand>
        <name>Mn(2+)</name>
        <dbReference type="ChEBI" id="CHEBI:29035"/>
        <label>2</label>
    </ligand>
</feature>
<feature type="binding site" evidence="2">
    <location>
        <begin position="204"/>
        <end position="209"/>
    </location>
    <ligand>
        <name>ATP</name>
        <dbReference type="ChEBI" id="CHEBI:30616"/>
    </ligand>
</feature>
<feature type="binding site" evidence="2">
    <location>
        <position position="204"/>
    </location>
    <ligand>
        <name>Mn(2+)</name>
        <dbReference type="ChEBI" id="CHEBI:29035"/>
        <label>2</label>
    </ligand>
</feature>
<feature type="binding site" evidence="4">
    <location>
        <begin position="247"/>
        <end position="248"/>
    </location>
    <ligand>
        <name>L-glutamate</name>
        <dbReference type="ChEBI" id="CHEBI:29985"/>
    </ligand>
</feature>
<feature type="binding site" evidence="2">
    <location>
        <position position="254"/>
    </location>
    <ligand>
        <name>Mn(2+)</name>
        <dbReference type="ChEBI" id="CHEBI:29035"/>
        <label>1</label>
    </ligand>
</feature>
<feature type="binding site" evidence="2">
    <location>
        <begin position="256"/>
        <end position="258"/>
    </location>
    <ligand>
        <name>ATP</name>
        <dbReference type="ChEBI" id="CHEBI:30616"/>
    </ligand>
</feature>
<feature type="binding site" evidence="2">
    <location>
        <position position="320"/>
    </location>
    <ligand>
        <name>ATP</name>
        <dbReference type="ChEBI" id="CHEBI:30616"/>
    </ligand>
</feature>
<feature type="binding site" evidence="4">
    <location>
        <position position="320"/>
    </location>
    <ligand>
        <name>L-glutamate</name>
        <dbReference type="ChEBI" id="CHEBI:29985"/>
    </ligand>
</feature>
<feature type="binding site" evidence="2">
    <location>
        <position position="325"/>
    </location>
    <ligand>
        <name>ATP</name>
        <dbReference type="ChEBI" id="CHEBI:30616"/>
    </ligand>
</feature>
<feature type="binding site" evidence="2">
    <location>
        <begin position="337"/>
        <end position="339"/>
    </location>
    <ligand>
        <name>ADP</name>
        <dbReference type="ChEBI" id="CHEBI:456216"/>
    </ligand>
</feature>
<feature type="binding site" evidence="2">
    <location>
        <position position="339"/>
    </location>
    <ligand>
        <name>Mn(2+)</name>
        <dbReference type="ChEBI" id="CHEBI:29035"/>
        <label>1</label>
    </ligand>
</feature>
<feature type="binding site" evidence="4">
    <location>
        <position position="341"/>
    </location>
    <ligand>
        <name>L-glutamate</name>
        <dbReference type="ChEBI" id="CHEBI:29985"/>
    </ligand>
</feature>
<feature type="modified residue" description="N6-acetyllysine" evidence="2">
    <location>
        <position position="11"/>
    </location>
</feature>
<feature type="modified residue" description="N6-acetyllysine" evidence="2">
    <location>
        <position position="14"/>
    </location>
</feature>
<feature type="modified residue" description="Phosphoserine" evidence="2">
    <location>
        <position position="344"/>
    </location>
</feature>
<evidence type="ECO:0000250" key="1">
    <source>
        <dbReference type="UniProtKB" id="P09606"/>
    </source>
</evidence>
<evidence type="ECO:0000250" key="2">
    <source>
        <dbReference type="UniProtKB" id="P15104"/>
    </source>
</evidence>
<evidence type="ECO:0000250" key="3">
    <source>
        <dbReference type="UniProtKB" id="P15105"/>
    </source>
</evidence>
<evidence type="ECO:0000250" key="4">
    <source>
        <dbReference type="UniProtKB" id="P9WN39"/>
    </source>
</evidence>
<evidence type="ECO:0000255" key="5">
    <source>
        <dbReference type="PROSITE-ProRule" id="PRU01330"/>
    </source>
</evidence>
<evidence type="ECO:0000255" key="6">
    <source>
        <dbReference type="PROSITE-ProRule" id="PRU01331"/>
    </source>
</evidence>
<evidence type="ECO:0000303" key="7">
    <source ref="1"/>
</evidence>
<evidence type="ECO:0000305" key="8"/>
<protein>
    <recommendedName>
        <fullName evidence="2">Glutamine synthetase</fullName>
        <shortName evidence="1">GS</shortName>
        <ecNumber evidence="2">6.3.1.2</ecNumber>
    </recommendedName>
    <alternativeName>
        <fullName evidence="8">Glutamate--ammonia ligase</fullName>
    </alternativeName>
    <alternativeName>
        <fullName evidence="8">Palmitoyltransferase GLUL</fullName>
        <ecNumber evidence="2">2.3.1.225</ecNumber>
    </alternativeName>
</protein>
<name>GLNA_MACFA</name>
<proteinExistence type="evidence at transcript level"/>
<keyword id="KW-0007">Acetylation</keyword>
<keyword id="KW-0037">Angiogenesis</keyword>
<keyword id="KW-0067">ATP-binding</keyword>
<keyword id="KW-1003">Cell membrane</keyword>
<keyword id="KW-0963">Cytoplasm</keyword>
<keyword id="KW-0256">Endoplasmic reticulum</keyword>
<keyword id="KW-0436">Ligase</keyword>
<keyword id="KW-0449">Lipoprotein</keyword>
<keyword id="KW-0460">Magnesium</keyword>
<keyword id="KW-0464">Manganese</keyword>
<keyword id="KW-0472">Membrane</keyword>
<keyword id="KW-0479">Metal-binding</keyword>
<keyword id="KW-0492">Microsome</keyword>
<keyword id="KW-0496">Mitochondrion</keyword>
<keyword id="KW-0547">Nucleotide-binding</keyword>
<keyword id="KW-0564">Palmitate</keyword>
<keyword id="KW-0597">Phosphoprotein</keyword>
<keyword id="KW-1185">Reference proteome</keyword>
<keyword id="KW-0808">Transferase</keyword>
<keyword id="KW-0832">Ubl conjugation</keyword>
<gene>
    <name evidence="2" type="primary">GLUL</name>
    <name evidence="7" type="ORF">QtsA-14381</name>
</gene>
<dbReference type="EC" id="6.3.1.2" evidence="2"/>
<dbReference type="EC" id="2.3.1.225" evidence="2"/>
<dbReference type="EMBL" id="AB168719">
    <property type="protein sequence ID" value="BAE00829.1"/>
    <property type="molecule type" value="mRNA"/>
</dbReference>
<dbReference type="RefSeq" id="NP_001270340.1">
    <property type="nucleotide sequence ID" value="NM_001283411.1"/>
</dbReference>
<dbReference type="SMR" id="Q4R7U3"/>
<dbReference type="STRING" id="9541.ENSMFAP00000001626"/>
<dbReference type="eggNOG" id="KOG0683">
    <property type="taxonomic scope" value="Eukaryota"/>
</dbReference>
<dbReference type="Proteomes" id="UP000233100">
    <property type="component" value="Unplaced"/>
</dbReference>
<dbReference type="GO" id="GO:0005829">
    <property type="term" value="C:cytosol"/>
    <property type="evidence" value="ECO:0000250"/>
    <property type="project" value="UniProtKB"/>
</dbReference>
<dbReference type="GO" id="GO:0005783">
    <property type="term" value="C:endoplasmic reticulum"/>
    <property type="evidence" value="ECO:0007669"/>
    <property type="project" value="UniProtKB-KW"/>
</dbReference>
<dbReference type="GO" id="GO:0005739">
    <property type="term" value="C:mitochondrion"/>
    <property type="evidence" value="ECO:0007669"/>
    <property type="project" value="UniProtKB-SubCell"/>
</dbReference>
<dbReference type="GO" id="GO:0005886">
    <property type="term" value="C:plasma membrane"/>
    <property type="evidence" value="ECO:0000250"/>
    <property type="project" value="UniProtKB"/>
</dbReference>
<dbReference type="GO" id="GO:0005524">
    <property type="term" value="F:ATP binding"/>
    <property type="evidence" value="ECO:0007669"/>
    <property type="project" value="UniProtKB-KW"/>
</dbReference>
<dbReference type="GO" id="GO:0004356">
    <property type="term" value="F:glutamine synthetase activity"/>
    <property type="evidence" value="ECO:0000250"/>
    <property type="project" value="UniProtKB"/>
</dbReference>
<dbReference type="GO" id="GO:0046872">
    <property type="term" value="F:metal ion binding"/>
    <property type="evidence" value="ECO:0007669"/>
    <property type="project" value="UniProtKB-KW"/>
</dbReference>
<dbReference type="GO" id="GO:0019706">
    <property type="term" value="F:protein-cysteine S-palmitoyltransferase activity"/>
    <property type="evidence" value="ECO:0000250"/>
    <property type="project" value="UniProtKB"/>
</dbReference>
<dbReference type="GO" id="GO:0001525">
    <property type="term" value="P:angiogenesis"/>
    <property type="evidence" value="ECO:0007669"/>
    <property type="project" value="UniProtKB-KW"/>
</dbReference>
<dbReference type="GO" id="GO:0006542">
    <property type="term" value="P:glutamine biosynthetic process"/>
    <property type="evidence" value="ECO:0007669"/>
    <property type="project" value="InterPro"/>
</dbReference>
<dbReference type="GO" id="GO:0097275">
    <property type="term" value="P:intracellular ammonium homeostasis"/>
    <property type="evidence" value="ECO:0000250"/>
    <property type="project" value="UniProtKB"/>
</dbReference>
<dbReference type="GO" id="GO:0045648">
    <property type="term" value="P:positive regulation of erythrocyte differentiation"/>
    <property type="evidence" value="ECO:0000250"/>
    <property type="project" value="UniProtKB"/>
</dbReference>
<dbReference type="GO" id="GO:0018345">
    <property type="term" value="P:protein palmitoylation"/>
    <property type="evidence" value="ECO:0000250"/>
    <property type="project" value="UniProtKB"/>
</dbReference>
<dbReference type="GO" id="GO:0010594">
    <property type="term" value="P:regulation of endothelial cell migration"/>
    <property type="evidence" value="ECO:0000250"/>
    <property type="project" value="UniProtKB"/>
</dbReference>
<dbReference type="GO" id="GO:1903670">
    <property type="term" value="P:regulation of sprouting angiogenesis"/>
    <property type="evidence" value="ECO:0000250"/>
    <property type="project" value="UniProtKB"/>
</dbReference>
<dbReference type="FunFam" id="3.10.20.70:FF:000004">
    <property type="entry name" value="Glutamine synthetase"/>
    <property type="match status" value="1"/>
</dbReference>
<dbReference type="FunFam" id="3.30.590.10:FF:000011">
    <property type="entry name" value="Glutamine synthetase"/>
    <property type="match status" value="1"/>
</dbReference>
<dbReference type="Gene3D" id="3.10.20.70">
    <property type="entry name" value="Glutamine synthetase, N-terminal domain"/>
    <property type="match status" value="1"/>
</dbReference>
<dbReference type="Gene3D" id="3.30.590.10">
    <property type="entry name" value="Glutamine synthetase/guanido kinase, catalytic domain"/>
    <property type="match status" value="2"/>
</dbReference>
<dbReference type="InterPro" id="IPR008147">
    <property type="entry name" value="Gln_synt_N"/>
</dbReference>
<dbReference type="InterPro" id="IPR036651">
    <property type="entry name" value="Gln_synt_N_sf"/>
</dbReference>
<dbReference type="InterPro" id="IPR014746">
    <property type="entry name" value="Gln_synth/guanido_kin_cat_dom"/>
</dbReference>
<dbReference type="InterPro" id="IPR008146">
    <property type="entry name" value="Gln_synth_cat_dom"/>
</dbReference>
<dbReference type="InterPro" id="IPR027303">
    <property type="entry name" value="Gln_synth_gly_rich_site"/>
</dbReference>
<dbReference type="InterPro" id="IPR027302">
    <property type="entry name" value="Gln_synth_N_conserv_site"/>
</dbReference>
<dbReference type="InterPro" id="IPR050292">
    <property type="entry name" value="Glutamine_Synthetase"/>
</dbReference>
<dbReference type="PANTHER" id="PTHR20852">
    <property type="entry name" value="GLUTAMINE SYNTHETASE"/>
    <property type="match status" value="1"/>
</dbReference>
<dbReference type="PANTHER" id="PTHR20852:SF45">
    <property type="entry name" value="GLUTAMINE SYNTHETASE"/>
    <property type="match status" value="1"/>
</dbReference>
<dbReference type="Pfam" id="PF00120">
    <property type="entry name" value="Gln-synt_C"/>
    <property type="match status" value="1"/>
</dbReference>
<dbReference type="Pfam" id="PF03951">
    <property type="entry name" value="Gln-synt_N"/>
    <property type="match status" value="1"/>
</dbReference>
<dbReference type="SMART" id="SM01230">
    <property type="entry name" value="Gln-synt_C"/>
    <property type="match status" value="1"/>
</dbReference>
<dbReference type="SUPFAM" id="SSF54368">
    <property type="entry name" value="Glutamine synthetase, N-terminal domain"/>
    <property type="match status" value="1"/>
</dbReference>
<dbReference type="SUPFAM" id="SSF55931">
    <property type="entry name" value="Glutamine synthetase/guanido kinase"/>
    <property type="match status" value="1"/>
</dbReference>
<dbReference type="PROSITE" id="PS00180">
    <property type="entry name" value="GLNA_1"/>
    <property type="match status" value="1"/>
</dbReference>
<dbReference type="PROSITE" id="PS00181">
    <property type="entry name" value="GLNA_ATP"/>
    <property type="match status" value="1"/>
</dbReference>
<dbReference type="PROSITE" id="PS51986">
    <property type="entry name" value="GS_BETA_GRASP"/>
    <property type="match status" value="1"/>
</dbReference>
<dbReference type="PROSITE" id="PS51987">
    <property type="entry name" value="GS_CATALYTIC"/>
    <property type="match status" value="1"/>
</dbReference>
<organism>
    <name type="scientific">Macaca fascicularis</name>
    <name type="common">Crab-eating macaque</name>
    <name type="synonym">Cynomolgus monkey</name>
    <dbReference type="NCBI Taxonomy" id="9541"/>
    <lineage>
        <taxon>Eukaryota</taxon>
        <taxon>Metazoa</taxon>
        <taxon>Chordata</taxon>
        <taxon>Craniata</taxon>
        <taxon>Vertebrata</taxon>
        <taxon>Euteleostomi</taxon>
        <taxon>Mammalia</taxon>
        <taxon>Eutheria</taxon>
        <taxon>Euarchontoglires</taxon>
        <taxon>Primates</taxon>
        <taxon>Haplorrhini</taxon>
        <taxon>Catarrhini</taxon>
        <taxon>Cercopithecidae</taxon>
        <taxon>Cercopithecinae</taxon>
        <taxon>Macaca</taxon>
    </lineage>
</organism>